<protein>
    <recommendedName>
        <fullName>Truncated transposon Ty1-A Gag-Pol polyprotein</fullName>
    </recommendedName>
    <alternativeName>
        <fullName>TY1B</fullName>
    </alternativeName>
    <alternativeName>
        <fullName>Transposon Ty1 TYB polyprotein</fullName>
    </alternativeName>
    <component>
        <recommendedName>
            <fullName>Integrase</fullName>
            <shortName>IN</shortName>
        </recommendedName>
        <alternativeName>
            <fullName>Pol-p71</fullName>
        </alternativeName>
        <alternativeName>
            <fullName>p84</fullName>
        </alternativeName>
        <alternativeName>
            <fullName>p90</fullName>
        </alternativeName>
    </component>
    <component>
        <recommendedName>
            <fullName>Reverse transcriptase/ribonuclease H</fullName>
            <shortName>RT</shortName>
            <shortName>RT-RH</shortName>
            <ecNumber>2.7.7.49</ecNumber>
            <ecNumber>2.7.7.7</ecNumber>
            <ecNumber>3.1.26.4</ecNumber>
        </recommendedName>
        <alternativeName>
            <fullName>Pol-p63</fullName>
        </alternativeName>
        <alternativeName>
            <fullName>p60</fullName>
        </alternativeName>
    </component>
</protein>
<name>YA11B_YEAST</name>
<organism>
    <name type="scientific">Saccharomyces cerevisiae (strain ATCC 204508 / S288c)</name>
    <name type="common">Baker's yeast</name>
    <dbReference type="NCBI Taxonomy" id="559292"/>
    <lineage>
        <taxon>Eukaryota</taxon>
        <taxon>Fungi</taxon>
        <taxon>Dikarya</taxon>
        <taxon>Ascomycota</taxon>
        <taxon>Saccharomycotina</taxon>
        <taxon>Saccharomycetes</taxon>
        <taxon>Saccharomycetales</taxon>
        <taxon>Saccharomycetaceae</taxon>
        <taxon>Saccharomyces</taxon>
    </lineage>
</organism>
<evidence type="ECO:0000250" key="1"/>
<evidence type="ECO:0000255" key="2">
    <source>
        <dbReference type="PROSITE-ProRule" id="PRU00457"/>
    </source>
</evidence>
<evidence type="ECO:0000256" key="3">
    <source>
        <dbReference type="SAM" id="MobiDB-lite"/>
    </source>
</evidence>
<evidence type="ECO:0000305" key="4"/>
<keyword id="KW-0963">Cytoplasm</keyword>
<keyword id="KW-0229">DNA integration</keyword>
<keyword id="KW-0233">DNA recombination</keyword>
<keyword id="KW-0238">DNA-binding</keyword>
<keyword id="KW-0239">DNA-directed DNA polymerase</keyword>
<keyword id="KW-0255">Endonuclease</keyword>
<keyword id="KW-0378">Hydrolase</keyword>
<keyword id="KW-0460">Magnesium</keyword>
<keyword id="KW-0479">Metal-binding</keyword>
<keyword id="KW-0511">Multifunctional enzyme</keyword>
<keyword id="KW-0540">Nuclease</keyword>
<keyword id="KW-0548">Nucleotidyltransferase</keyword>
<keyword id="KW-0539">Nucleus</keyword>
<keyword id="KW-1185">Reference proteome</keyword>
<keyword id="KW-0694">RNA-binding</keyword>
<keyword id="KW-0695">RNA-directed DNA polymerase</keyword>
<keyword id="KW-0808">Transferase</keyword>
<keyword id="KW-0814">Transposable element</keyword>
<keyword id="KW-0815">Transposition</keyword>
<accession>O13527</accession>
<accession>D6VPM1</accession>
<dbReference type="EC" id="2.7.7.49"/>
<dbReference type="EC" id="2.7.7.7"/>
<dbReference type="EC" id="3.1.26.4"/>
<dbReference type="EMBL" id="L22015">
    <property type="protein sequence ID" value="AAC04967.1"/>
    <property type="molecule type" value="Genomic_DNA"/>
</dbReference>
<dbReference type="EMBL" id="BK006935">
    <property type="protein sequence ID" value="DAA06991.1"/>
    <property type="molecule type" value="Genomic_DNA"/>
</dbReference>
<dbReference type="PIR" id="S40908">
    <property type="entry name" value="S40908"/>
</dbReference>
<dbReference type="RefSeq" id="NP_009406.1">
    <property type="nucleotide sequence ID" value="NM_001178213.1"/>
</dbReference>
<dbReference type="SMR" id="O13527"/>
<dbReference type="BioGRID" id="31795">
    <property type="interactions" value="7"/>
</dbReference>
<dbReference type="DIP" id="DIP-2632N"/>
<dbReference type="FunCoup" id="O13527">
    <property type="interactions" value="190"/>
</dbReference>
<dbReference type="IntAct" id="O13527">
    <property type="interactions" value="3"/>
</dbReference>
<dbReference type="MINT" id="O13527"/>
<dbReference type="GlyGen" id="O13527">
    <property type="glycosylation" value="1 site"/>
</dbReference>
<dbReference type="iPTMnet" id="O13527"/>
<dbReference type="PaxDb" id="4932-YAR009C"/>
<dbReference type="PeptideAtlas" id="O13527"/>
<dbReference type="GeneID" id="851268"/>
<dbReference type="KEGG" id="sce:YAR009C"/>
<dbReference type="AGR" id="SGD:S000000067"/>
<dbReference type="SGD" id="S000000067">
    <property type="gene designation" value="YAR009C"/>
</dbReference>
<dbReference type="VEuPathDB" id="FungiDB:YAR009C"/>
<dbReference type="eggNOG" id="KOG0017">
    <property type="taxonomic scope" value="Eukaryota"/>
</dbReference>
<dbReference type="HOGENOM" id="CLU_003908_0_0_1"/>
<dbReference type="InParanoid" id="O13527"/>
<dbReference type="OrthoDB" id="5423336at2759"/>
<dbReference type="BioGRID-ORCS" id="851268">
    <property type="hits" value="0 hits in 10 CRISPR screens"/>
</dbReference>
<dbReference type="PRO" id="PR:O13527"/>
<dbReference type="Proteomes" id="UP000002311">
    <property type="component" value="Chromosome I"/>
</dbReference>
<dbReference type="RNAct" id="O13527">
    <property type="molecule type" value="protein"/>
</dbReference>
<dbReference type="GO" id="GO:0005737">
    <property type="term" value="C:cytoplasm"/>
    <property type="evidence" value="ECO:0007005"/>
    <property type="project" value="SGD"/>
</dbReference>
<dbReference type="GO" id="GO:0005634">
    <property type="term" value="C:nucleus"/>
    <property type="evidence" value="ECO:0000314"/>
    <property type="project" value="SGD"/>
</dbReference>
<dbReference type="GO" id="GO:0003677">
    <property type="term" value="F:DNA binding"/>
    <property type="evidence" value="ECO:0007669"/>
    <property type="project" value="UniProtKB-KW"/>
</dbReference>
<dbReference type="GO" id="GO:0003887">
    <property type="term" value="F:DNA-directed DNA polymerase activity"/>
    <property type="evidence" value="ECO:0007669"/>
    <property type="project" value="UniProtKB-KW"/>
</dbReference>
<dbReference type="GO" id="GO:0046872">
    <property type="term" value="F:metal ion binding"/>
    <property type="evidence" value="ECO:0007669"/>
    <property type="project" value="UniProtKB-KW"/>
</dbReference>
<dbReference type="GO" id="GO:0003723">
    <property type="term" value="F:RNA binding"/>
    <property type="evidence" value="ECO:0007669"/>
    <property type="project" value="UniProtKB-KW"/>
</dbReference>
<dbReference type="GO" id="GO:0003964">
    <property type="term" value="F:RNA-directed DNA polymerase activity"/>
    <property type="evidence" value="ECO:0007669"/>
    <property type="project" value="UniProtKB-KW"/>
</dbReference>
<dbReference type="GO" id="GO:0004523">
    <property type="term" value="F:RNA-DNA hybrid ribonuclease activity"/>
    <property type="evidence" value="ECO:0007669"/>
    <property type="project" value="UniProtKB-EC"/>
</dbReference>
<dbReference type="GO" id="GO:0015074">
    <property type="term" value="P:DNA integration"/>
    <property type="evidence" value="ECO:0007669"/>
    <property type="project" value="UniProtKB-KW"/>
</dbReference>
<dbReference type="GO" id="GO:0006310">
    <property type="term" value="P:DNA recombination"/>
    <property type="evidence" value="ECO:0007669"/>
    <property type="project" value="UniProtKB-KW"/>
</dbReference>
<dbReference type="GO" id="GO:0032196">
    <property type="term" value="P:transposition"/>
    <property type="evidence" value="ECO:0007669"/>
    <property type="project" value="UniProtKB-KW"/>
</dbReference>
<dbReference type="CDD" id="cd09272">
    <property type="entry name" value="RNase_HI_RT_Ty1"/>
    <property type="match status" value="1"/>
</dbReference>
<dbReference type="FunFam" id="3.30.420.10:FF:000050">
    <property type="entry name" value="Transposon Ty2-DR3 Gag-Pol polyprotein"/>
    <property type="match status" value="1"/>
</dbReference>
<dbReference type="Gene3D" id="3.30.420.10">
    <property type="entry name" value="Ribonuclease H-like superfamily/Ribonuclease H"/>
    <property type="match status" value="1"/>
</dbReference>
<dbReference type="InterPro" id="IPR043502">
    <property type="entry name" value="DNA/RNA_pol_sf"/>
</dbReference>
<dbReference type="InterPro" id="IPR001584">
    <property type="entry name" value="Integrase_cat-core"/>
</dbReference>
<dbReference type="InterPro" id="IPR039537">
    <property type="entry name" value="Retrotran_Ty1/copia-like"/>
</dbReference>
<dbReference type="InterPro" id="IPR012337">
    <property type="entry name" value="RNaseH-like_sf"/>
</dbReference>
<dbReference type="InterPro" id="IPR036397">
    <property type="entry name" value="RNaseH_sf"/>
</dbReference>
<dbReference type="InterPro" id="IPR013103">
    <property type="entry name" value="RVT_2"/>
</dbReference>
<dbReference type="PANTHER" id="PTHR42648">
    <property type="entry name" value="TRANSPOSASE, PUTATIVE-RELATED"/>
    <property type="match status" value="1"/>
</dbReference>
<dbReference type="PANTHER" id="PTHR42648:SF11">
    <property type="entry name" value="TRANSPOSON TY4-P GAG-POL POLYPROTEIN"/>
    <property type="match status" value="1"/>
</dbReference>
<dbReference type="Pfam" id="PF00665">
    <property type="entry name" value="rve"/>
    <property type="match status" value="1"/>
</dbReference>
<dbReference type="Pfam" id="PF07727">
    <property type="entry name" value="RVT_2"/>
    <property type="match status" value="1"/>
</dbReference>
<dbReference type="SUPFAM" id="SSF56672">
    <property type="entry name" value="DNA/RNA polymerases"/>
    <property type="match status" value="1"/>
</dbReference>
<dbReference type="SUPFAM" id="SSF53098">
    <property type="entry name" value="Ribonuclease H-like"/>
    <property type="match status" value="1"/>
</dbReference>
<dbReference type="PROSITE" id="PS50994">
    <property type="entry name" value="INTEGRASE"/>
    <property type="match status" value="1"/>
</dbReference>
<sequence length="1196" mass="136732">METFTGYLKSTCFHQISPYPPSIMSIQVKVHANILILSFIECLRMPMHRQIRYSLKNNTITYFNESDVDWSSAIDYQCPDCLIGKSTKHRHIKGSRLKYQNSYEPFQYLHTDIFGPVHNLPKSAPSYFISFTDETTKLRWVYPLHDRREDSILDVFTTILAFIKNQFQASVLVIQMDRGSEYTNRTLHKFLEKNGITPCYTTTADSRAHGVAERLNRTLLDDCRTQLQCSGLPNHLWFSAIEFSTIVRNSLASPKSKKSARQHAGLAGLDISTLLPFGQPVIVNDHNPNSKIHPRGIPGYALHPSRNSYGYIIYLPSLKKTVDTTNYVILQGKESRLDQFNYDALTFDEDLNRLTASYHSFIASNEIQESNDLNIESDHDFQSDIELHPEQPRNVLSKAVSPTDSTPPSTHTEDSKRVSKTNIRAPREVDPNISESNILPSKKRSSTPQISNIESTGSGGMHKLNVPLLAPMSQSNTHESSHASKSKDFRHSDSYSENETNHTNVPISSTGGTNNKTVPQISDQETEKRIIHRSPSIDASPPENNSSHNIVPIKTPTTVSEQNTEESIIADLPLPDLPPESPTEFPDPFKELPPINSHQTNSSLGGIGDSNAYTTINSKKRSLEDNETEIKVSRDTWNTKNMRSLEPPRSKKRIHLIAAVKAVKSIKPIRTTLRYDEAITYNKDIKEKEKYIEAYHKEVNQLLKMNTWDTDKYYDRKEIDPKRVINSMFIFNKKRDGTHKARFVARGDIQHPDTYDTGMQSNTVHHYALMTSLSLALDNNYYITQLDISSAYLYADIKEELYIRPPPHLGMNDKLIRLKKSLYGLKQSGANWYETIKSYLIKQCGMEEVRGWSCVFKNSQVTICLFVDDMILFSKDLNANKKIITTLKKQYDTKIINLGESDNEIQYDILGLEIKYQRGKYMKLGMEKSLTEKLPKLNVPLNPKGKKLRAPGQPGLYIDQDELEIDEDEYKEKVHEMQKLIGLASYVGYKFRFDLLYYINTLAQHILFPSRQVLDMTYELIQFMWDTRDKQLIWHKNKPTEPDNKLVAISDASYGNQPYYKSQIGNIYLLNGKVIGGKSTKASLTCTSTTEAEIHAISESVPLLNNLSYLIQELNKKPIIKGLLTDSRSTISIIKSTNEEKFRNRFFGTKAMRLRDEVSGNNLYVYYIETKKNIADVMTKPLPIKTFKLLTNKWIH</sequence>
<feature type="chain" id="PRO_0000278977" description="Truncated transposon Ty1-A Gag-Pol polyprotein">
    <location>
        <begin position="1"/>
        <end position="1196"/>
    </location>
</feature>
<feature type="chain" id="PRO_0000278980" description="Integrase" evidence="1">
    <location>
        <begin position="1"/>
        <end position="658"/>
    </location>
</feature>
<feature type="chain" id="PRO_0000278981" description="Reverse transcriptase/ribonuclease H" evidence="1">
    <location>
        <begin position="659"/>
        <end position="1196"/>
    </location>
</feature>
<feature type="domain" description="Integrase catalytic" evidence="2">
    <location>
        <begin position="101"/>
        <end position="276"/>
    </location>
</feature>
<feature type="domain" description="Reverse transcriptase Ty1/copia-type">
    <location>
        <begin position="779"/>
        <end position="917"/>
    </location>
</feature>
<feature type="domain" description="RNase H Ty1/copia-type">
    <location>
        <begin position="1051"/>
        <end position="1193"/>
    </location>
</feature>
<feature type="region of interest" description="Disordered" evidence="3">
    <location>
        <begin position="397"/>
        <end position="528"/>
    </location>
</feature>
<feature type="region of interest" description="Disordered" evidence="3">
    <location>
        <begin position="533"/>
        <end position="552"/>
    </location>
</feature>
<feature type="region of interest" description="Disordered" evidence="3">
    <location>
        <begin position="571"/>
        <end position="628"/>
    </location>
</feature>
<feature type="short sequence motif" description="Bipartite nuclear localization signal" evidence="1">
    <location>
        <begin position="619"/>
        <end position="653"/>
    </location>
</feature>
<feature type="compositionally biased region" description="Low complexity" evidence="3">
    <location>
        <begin position="401"/>
        <end position="410"/>
    </location>
</feature>
<feature type="compositionally biased region" description="Polar residues" evidence="3">
    <location>
        <begin position="446"/>
        <end position="456"/>
    </location>
</feature>
<feature type="compositionally biased region" description="Basic and acidic residues" evidence="3">
    <location>
        <begin position="479"/>
        <end position="494"/>
    </location>
</feature>
<feature type="compositionally biased region" description="Polar residues" evidence="3">
    <location>
        <begin position="495"/>
        <end position="523"/>
    </location>
</feature>
<feature type="compositionally biased region" description="Polar residues" evidence="3">
    <location>
        <begin position="542"/>
        <end position="552"/>
    </location>
</feature>
<feature type="binding site" evidence="2">
    <location>
        <position position="112"/>
    </location>
    <ligand>
        <name>Mg(2+)</name>
        <dbReference type="ChEBI" id="CHEBI:18420"/>
        <label>1</label>
        <note>catalytic; for integrase activity</note>
    </ligand>
</feature>
<feature type="binding site" evidence="2">
    <location>
        <position position="177"/>
    </location>
    <ligand>
        <name>Mg(2+)</name>
        <dbReference type="ChEBI" id="CHEBI:18420"/>
        <label>1</label>
        <note>catalytic; for integrase activity</note>
    </ligand>
</feature>
<feature type="binding site" evidence="2">
    <location>
        <position position="787"/>
    </location>
    <ligand>
        <name>Mg(2+)</name>
        <dbReference type="ChEBI" id="CHEBI:18420"/>
        <label>2</label>
        <note>catalytic; for reverse transcriptase activity</note>
    </ligand>
</feature>
<feature type="binding site" evidence="2">
    <location>
        <position position="868"/>
    </location>
    <ligand>
        <name>Mg(2+)</name>
        <dbReference type="ChEBI" id="CHEBI:18420"/>
        <label>2</label>
        <note>catalytic; for reverse transcriptase activity</note>
    </ligand>
</feature>
<feature type="binding site" evidence="2">
    <location>
        <position position="869"/>
    </location>
    <ligand>
        <name>Mg(2+)</name>
        <dbReference type="ChEBI" id="CHEBI:18420"/>
        <label>2</label>
        <note>catalytic; for reverse transcriptase activity</note>
    </ligand>
</feature>
<feature type="binding site" evidence="2">
    <location>
        <position position="1051"/>
    </location>
    <ligand>
        <name>Mg(2+)</name>
        <dbReference type="ChEBI" id="CHEBI:18420"/>
        <label>3</label>
        <note>catalytic; for RNase H activity</note>
    </ligand>
</feature>
<feature type="binding site" evidence="2">
    <location>
        <position position="1093"/>
    </location>
    <ligand>
        <name>Mg(2+)</name>
        <dbReference type="ChEBI" id="CHEBI:18420"/>
        <label>3</label>
        <note>catalytic; for RNase H activity</note>
    </ligand>
</feature>
<feature type="binding site" evidence="2">
    <location>
        <position position="1126"/>
    </location>
    <ligand>
        <name>Mg(2+)</name>
        <dbReference type="ChEBI" id="CHEBI:18420"/>
        <label>3</label>
        <note>catalytic; for RNase H activity</note>
    </ligand>
</feature>
<feature type="site" description="Cleavage; by Ty1 protease" evidence="1">
    <location>
        <begin position="658"/>
        <end position="659"/>
    </location>
</feature>
<comment type="function">
    <text evidence="1">Reverse transcriptase/ribonuclease H (RT) is a multifunctional enzyme that catalyzes the conversion of the retro-elements RNA genome into dsDNA within the VLP. The enzyme displays a DNA polymerase activity that can copy either DNA or RNA templates, and a ribonuclease H (RNase H) activity that cleaves the RNA strand of RNA-DNA heteroduplexes during plus-strand synthesis and hydrolyzes RNA primers. The conversion leads to a linear dsDNA copy of the retrotransposon that includes long terminal repeats (LTRs) at both ends (By similarity).</text>
</comment>
<comment type="function">
    <text evidence="1">Integrase (IN) targets the VLP to the nucleus, where a subparticle preintegration complex (PIC) containing at least integrase and the newly synthesized dsDNA copy of the retrotransposon must transit the nuclear membrane. Once in the nucleus, integrase performs the integration of the dsDNA into the host genome (By similarity).</text>
</comment>
<comment type="catalytic activity">
    <reaction>
        <text>DNA(n) + a 2'-deoxyribonucleoside 5'-triphosphate = DNA(n+1) + diphosphate</text>
        <dbReference type="Rhea" id="RHEA:22508"/>
        <dbReference type="Rhea" id="RHEA-COMP:17339"/>
        <dbReference type="Rhea" id="RHEA-COMP:17340"/>
        <dbReference type="ChEBI" id="CHEBI:33019"/>
        <dbReference type="ChEBI" id="CHEBI:61560"/>
        <dbReference type="ChEBI" id="CHEBI:173112"/>
        <dbReference type="EC" id="2.7.7.49"/>
    </reaction>
</comment>
<comment type="catalytic activity">
    <reaction>
        <text>DNA(n) + a 2'-deoxyribonucleoside 5'-triphosphate = DNA(n+1) + diphosphate</text>
        <dbReference type="Rhea" id="RHEA:22508"/>
        <dbReference type="Rhea" id="RHEA-COMP:17339"/>
        <dbReference type="Rhea" id="RHEA-COMP:17340"/>
        <dbReference type="ChEBI" id="CHEBI:33019"/>
        <dbReference type="ChEBI" id="CHEBI:61560"/>
        <dbReference type="ChEBI" id="CHEBI:173112"/>
        <dbReference type="EC" id="2.7.7.7"/>
    </reaction>
</comment>
<comment type="catalytic activity">
    <reaction>
        <text>Endonucleolytic cleavage to 5'-phosphomonoester.</text>
        <dbReference type="EC" id="3.1.26.4"/>
    </reaction>
</comment>
<comment type="subcellular location">
    <subcellularLocation>
        <location>Cytoplasm</location>
    </subcellularLocation>
    <subcellularLocation>
        <location evidence="1">Nucleus</location>
    </subcellularLocation>
</comment>
<comment type="domain">
    <text evidence="1">The C-terminal RNA-binding region of CA is sufficient for all its nucleocapsid-like chaperone activities.</text>
</comment>
<comment type="domain">
    <text evidence="1">Integrase core domain contains the D-x(n)-D-x(35)-E motif, named for the phylogenetically conserved glutamic acid and aspartic acid residues and the invariant 35 amino acid spacing between the second and third acidic residues. Each acidic residue of the D,D(35)E motif is independently essential for the 3'-processing and strand transfer activities of purified integrase protein (By similarity).</text>
</comment>
<comment type="PTM">
    <text evidence="1">Initially, virus-like particles (VLPs) are composed of the structural unprocessed proteins Gag and Gag-Pol, and also contain the host initiator methionine tRNA (tRNA(i)-Met) which serves as a primer for minus-strand DNA synthesis, and a dimer of genomic Ty RNA. Processing of the polyproteins occurs within the particle and proceeds by an ordered pathway, called maturation. First, the protease (PR) is released by autocatalytic cleavage of the Gag-Pol polyprotein yielding capsid protein p45 and a Pol-p154 precursor protein. This cleavage is a prerequisite for subsequent processing of Pol-p154 at the remaining sites to release the mature structural and catalytic proteins. Maturation takes place prior to the RT reaction and is required to produce transposition-competent VLPs (By similarity).</text>
</comment>
<comment type="miscellaneous">
    <text>Retrotransposons are mobile genetic entities that are able to replicate via an RNA intermediate and a reverse transcription step. In contrast to retroviruses, retrotransposons are non-infectious, lack an envelope and remain intracellular. Ty1 retrotransposons belong to the copia elements (pseudoviridae).</text>
</comment>
<comment type="caution">
    <text evidence="4">Transposon Ty1-A (YARCTy1-1) contains a frameshift at position 610, which disrupts the ORF coding for protein TY1B. This is the truncated, C-terminal part of TY1B translated from an in-frame start codon, and it is probably not functional.</text>
</comment>
<reference key="1">
    <citation type="journal article" date="1994" name="Yeast">
        <title>Sequencing of chromosome I of Saccharomyces cerevisiae: analysis of the 42 kbp SPO7-CENI-CDC15 region.</title>
        <authorList>
            <person name="Clark M.W."/>
            <person name="Keng T."/>
            <person name="Storms R.K."/>
            <person name="Zhong W.-W."/>
            <person name="Fortin N."/>
            <person name="Zeng B."/>
            <person name="Delaney S."/>
            <person name="Ouellette B.F.F."/>
            <person name="Barton A.B."/>
            <person name="Kaback D.B."/>
            <person name="Bussey H."/>
        </authorList>
    </citation>
    <scope>NUCLEOTIDE SEQUENCE [GENOMIC DNA]</scope>
    <source>
        <strain>ATCC 204511 / S288c / AB972</strain>
    </source>
</reference>
<reference key="2">
    <citation type="journal article" date="1995" name="Proc. Natl. Acad. Sci. U.S.A.">
        <title>The nucleotide sequence of chromosome I from Saccharomyces cerevisiae.</title>
        <authorList>
            <person name="Bussey H."/>
            <person name="Kaback D.B."/>
            <person name="Zhong W.-W."/>
            <person name="Vo D.H."/>
            <person name="Clark M.W."/>
            <person name="Fortin N."/>
            <person name="Hall J."/>
            <person name="Ouellette B.F.F."/>
            <person name="Keng T."/>
            <person name="Barton A.B."/>
            <person name="Su Y."/>
            <person name="Davies C.J."/>
            <person name="Storms R.K."/>
        </authorList>
    </citation>
    <scope>NUCLEOTIDE SEQUENCE [LARGE SCALE GENOMIC DNA]</scope>
    <source>
        <strain>ATCC 204508 / S288c</strain>
    </source>
</reference>
<reference key="3">
    <citation type="journal article" date="2014" name="G3 (Bethesda)">
        <title>The reference genome sequence of Saccharomyces cerevisiae: Then and now.</title>
        <authorList>
            <person name="Engel S.R."/>
            <person name="Dietrich F.S."/>
            <person name="Fisk D.G."/>
            <person name="Binkley G."/>
            <person name="Balakrishnan R."/>
            <person name="Costanzo M.C."/>
            <person name="Dwight S.S."/>
            <person name="Hitz B.C."/>
            <person name="Karra K."/>
            <person name="Nash R.S."/>
            <person name="Weng S."/>
            <person name="Wong E.D."/>
            <person name="Lloyd P."/>
            <person name="Skrzypek M.S."/>
            <person name="Miyasato S.R."/>
            <person name="Simison M."/>
            <person name="Cherry J.M."/>
        </authorList>
    </citation>
    <scope>GENOME REANNOTATION</scope>
    <source>
        <strain>ATCC 204508 / S288c</strain>
    </source>
</reference>
<reference key="4">
    <citation type="journal article" date="1998" name="Genome Res.">
        <title>Transposable elements and genome organization: a comprehensive survey of retrotransposons revealed by the complete Saccharomyces cerevisiae genome sequence.</title>
        <authorList>
            <person name="Kim J.M."/>
            <person name="Vanguri S."/>
            <person name="Boeke J.D."/>
            <person name="Gabriel A."/>
            <person name="Voytas D.F."/>
        </authorList>
    </citation>
    <scope>NOMENCLATURE</scope>
    <scope>IDENTIFICATION OF FRAMESHIFT</scope>
</reference>
<reference key="5">
    <citation type="journal article" date="2005" name="Cytogenet. Genome Res.">
        <title>Happy together: the life and times of Ty retrotransposons and their hosts.</title>
        <authorList>
            <person name="Lesage P."/>
            <person name="Todeschini A.L."/>
        </authorList>
    </citation>
    <scope>REVIEW</scope>
</reference>
<reference key="6">
    <citation type="journal article" date="2005" name="Cytogenet. Genome Res.">
        <title>Reverse transcriptase and integrase of the Saccharomyces cerevisiae Ty1 element.</title>
        <authorList>
            <person name="Wilhelm F.-X."/>
            <person name="Wilhelm M."/>
            <person name="Gabriel A."/>
        </authorList>
    </citation>
    <scope>REVIEW</scope>
    <scope>DOMAINS</scope>
</reference>
<gene>
    <name type="primary">TY1B-A</name>
    <name type="synonym">YARCTy1-1 POL</name>
    <name type="ordered locus">YAR009C</name>
</gene>
<proteinExistence type="inferred from homology"/>